<evidence type="ECO:0000255" key="1">
    <source>
        <dbReference type="HAMAP-Rule" id="MF_00219"/>
    </source>
</evidence>
<name>PYRC_ECTM1</name>
<sequence length="348" mass="38171">MSDRLTLLRPDDWHIHLRDGAVLPHTVGDAARTFGRAIIMPNLVPPVRNAAEADAYRQRILAARPAGSRFEPLMVLYLTDNTSPEDVRAAKASGFVHAAKLYPAGATTNSDSGVTSIDKIFPALEAMAEVGMLLLVHGEVTRAEIDVFDREKAFIDEHLTRVVERFPTLKVVFEHITTRDAVQFVEAASANVGATITAHHLLYNRNHMLVGGIRPHFYCLPILKRNVHQEALLDAATSGNVKFFLGTDSAPHAKHAKEAACGCAGCYTAFAAIELYAEAFEQRNALDKLEAFASFHGPDFYGLPRNTDSITLVREEWTVPASLPLGENSVVPLRAGETLRWKLLEGQA</sequence>
<reference key="1">
    <citation type="submission" date="2007-04" db="EMBL/GenBank/DDBJ databases">
        <title>Complete sequence of Pseudomonas mendocina ymp.</title>
        <authorList>
            <consortium name="US DOE Joint Genome Institute"/>
            <person name="Copeland A."/>
            <person name="Lucas S."/>
            <person name="Lapidus A."/>
            <person name="Barry K."/>
            <person name="Glavina del Rio T."/>
            <person name="Dalin E."/>
            <person name="Tice H."/>
            <person name="Pitluck S."/>
            <person name="Kiss H."/>
            <person name="Brettin T."/>
            <person name="Detter J.C."/>
            <person name="Bruce D."/>
            <person name="Han C."/>
            <person name="Schmutz J."/>
            <person name="Larimer F."/>
            <person name="Land M."/>
            <person name="Hauser L."/>
            <person name="Kyrpides N."/>
            <person name="Mikhailova N."/>
            <person name="Hersman L."/>
            <person name="Dubois J."/>
            <person name="Maurice P."/>
            <person name="Richardson P."/>
        </authorList>
    </citation>
    <scope>NUCLEOTIDE SEQUENCE [LARGE SCALE GENOMIC DNA]</scope>
    <source>
        <strain>ymp</strain>
    </source>
</reference>
<accession>A4XS41</accession>
<feature type="chain" id="PRO_1000024036" description="Dihydroorotase">
    <location>
        <begin position="1"/>
        <end position="348"/>
    </location>
</feature>
<feature type="active site" evidence="1">
    <location>
        <position position="248"/>
    </location>
</feature>
<feature type="binding site" evidence="1">
    <location>
        <position position="14"/>
    </location>
    <ligand>
        <name>Zn(2+)</name>
        <dbReference type="ChEBI" id="CHEBI:29105"/>
        <label>1</label>
    </ligand>
</feature>
<feature type="binding site" evidence="1">
    <location>
        <begin position="16"/>
        <end position="18"/>
    </location>
    <ligand>
        <name>substrate</name>
    </ligand>
</feature>
<feature type="binding site" evidence="1">
    <location>
        <position position="16"/>
    </location>
    <ligand>
        <name>Zn(2+)</name>
        <dbReference type="ChEBI" id="CHEBI:29105"/>
        <label>1</label>
    </ligand>
</feature>
<feature type="binding site" evidence="1">
    <location>
        <position position="42"/>
    </location>
    <ligand>
        <name>substrate</name>
    </ligand>
</feature>
<feature type="binding site" description="via carbamate group" evidence="1">
    <location>
        <position position="100"/>
    </location>
    <ligand>
        <name>Zn(2+)</name>
        <dbReference type="ChEBI" id="CHEBI:29105"/>
        <label>1</label>
    </ligand>
</feature>
<feature type="binding site" description="via carbamate group" evidence="1">
    <location>
        <position position="100"/>
    </location>
    <ligand>
        <name>Zn(2+)</name>
        <dbReference type="ChEBI" id="CHEBI:29105"/>
        <label>2</label>
    </ligand>
</feature>
<feature type="binding site" evidence="1">
    <location>
        <position position="137"/>
    </location>
    <ligand>
        <name>substrate</name>
    </ligand>
</feature>
<feature type="binding site" evidence="1">
    <location>
        <position position="137"/>
    </location>
    <ligand>
        <name>Zn(2+)</name>
        <dbReference type="ChEBI" id="CHEBI:29105"/>
        <label>2</label>
    </ligand>
</feature>
<feature type="binding site" evidence="1">
    <location>
        <position position="175"/>
    </location>
    <ligand>
        <name>Zn(2+)</name>
        <dbReference type="ChEBI" id="CHEBI:29105"/>
        <label>2</label>
    </ligand>
</feature>
<feature type="binding site" evidence="1">
    <location>
        <position position="220"/>
    </location>
    <ligand>
        <name>substrate</name>
    </ligand>
</feature>
<feature type="binding site" evidence="1">
    <location>
        <position position="248"/>
    </location>
    <ligand>
        <name>Zn(2+)</name>
        <dbReference type="ChEBI" id="CHEBI:29105"/>
        <label>1</label>
    </ligand>
</feature>
<feature type="binding site" evidence="1">
    <location>
        <position position="252"/>
    </location>
    <ligand>
        <name>substrate</name>
    </ligand>
</feature>
<feature type="binding site" evidence="1">
    <location>
        <position position="264"/>
    </location>
    <ligand>
        <name>substrate</name>
    </ligand>
</feature>
<feature type="modified residue" description="N6-carboxylysine" evidence="1">
    <location>
        <position position="100"/>
    </location>
</feature>
<gene>
    <name evidence="1" type="primary">pyrC</name>
    <name type="ordered locus">Pmen_1392</name>
</gene>
<comment type="function">
    <text evidence="1">Catalyzes the reversible cyclization of carbamoyl aspartate to dihydroorotate.</text>
</comment>
<comment type="catalytic activity">
    <reaction evidence="1">
        <text>(S)-dihydroorotate + H2O = N-carbamoyl-L-aspartate + H(+)</text>
        <dbReference type="Rhea" id="RHEA:24296"/>
        <dbReference type="ChEBI" id="CHEBI:15377"/>
        <dbReference type="ChEBI" id="CHEBI:15378"/>
        <dbReference type="ChEBI" id="CHEBI:30864"/>
        <dbReference type="ChEBI" id="CHEBI:32814"/>
        <dbReference type="EC" id="3.5.2.3"/>
    </reaction>
</comment>
<comment type="cofactor">
    <cofactor evidence="1">
        <name>Zn(2+)</name>
        <dbReference type="ChEBI" id="CHEBI:29105"/>
    </cofactor>
    <text evidence="1">Binds 2 Zn(2+) ions per subunit.</text>
</comment>
<comment type="pathway">
    <text evidence="1">Pyrimidine metabolism; UMP biosynthesis via de novo pathway; (S)-dihydroorotate from bicarbonate: step 3/3.</text>
</comment>
<comment type="subunit">
    <text evidence="1">Homodimer.</text>
</comment>
<comment type="similarity">
    <text evidence="1">Belongs to the metallo-dependent hydrolases superfamily. DHOase family. Class II DHOase subfamily.</text>
</comment>
<keyword id="KW-0378">Hydrolase</keyword>
<keyword id="KW-0479">Metal-binding</keyword>
<keyword id="KW-0665">Pyrimidine biosynthesis</keyword>
<keyword id="KW-0862">Zinc</keyword>
<dbReference type="EC" id="3.5.2.3" evidence="1"/>
<dbReference type="EMBL" id="CP000680">
    <property type="protein sequence ID" value="ABP84157.1"/>
    <property type="molecule type" value="Genomic_DNA"/>
</dbReference>
<dbReference type="SMR" id="A4XS41"/>
<dbReference type="STRING" id="399739.Pmen_1392"/>
<dbReference type="MEROPS" id="M38.A02"/>
<dbReference type="KEGG" id="pmy:Pmen_1392"/>
<dbReference type="PATRIC" id="fig|399739.8.peg.1412"/>
<dbReference type="eggNOG" id="COG0418">
    <property type="taxonomic scope" value="Bacteria"/>
</dbReference>
<dbReference type="HOGENOM" id="CLU_041558_1_0_6"/>
<dbReference type="OrthoDB" id="9808095at2"/>
<dbReference type="UniPathway" id="UPA00070">
    <property type="reaction ID" value="UER00117"/>
</dbReference>
<dbReference type="GO" id="GO:0005829">
    <property type="term" value="C:cytosol"/>
    <property type="evidence" value="ECO:0007669"/>
    <property type="project" value="TreeGrafter"/>
</dbReference>
<dbReference type="GO" id="GO:0004151">
    <property type="term" value="F:dihydroorotase activity"/>
    <property type="evidence" value="ECO:0007669"/>
    <property type="project" value="UniProtKB-UniRule"/>
</dbReference>
<dbReference type="GO" id="GO:0008270">
    <property type="term" value="F:zinc ion binding"/>
    <property type="evidence" value="ECO:0007669"/>
    <property type="project" value="UniProtKB-UniRule"/>
</dbReference>
<dbReference type="GO" id="GO:0006207">
    <property type="term" value="P:'de novo' pyrimidine nucleobase biosynthetic process"/>
    <property type="evidence" value="ECO:0007669"/>
    <property type="project" value="TreeGrafter"/>
</dbReference>
<dbReference type="GO" id="GO:0044205">
    <property type="term" value="P:'de novo' UMP biosynthetic process"/>
    <property type="evidence" value="ECO:0007669"/>
    <property type="project" value="UniProtKB-UniRule"/>
</dbReference>
<dbReference type="CDD" id="cd01294">
    <property type="entry name" value="DHOase"/>
    <property type="match status" value="1"/>
</dbReference>
<dbReference type="FunFam" id="3.20.20.140:FF:000006">
    <property type="entry name" value="Dihydroorotase"/>
    <property type="match status" value="1"/>
</dbReference>
<dbReference type="Gene3D" id="3.20.20.140">
    <property type="entry name" value="Metal-dependent hydrolases"/>
    <property type="match status" value="1"/>
</dbReference>
<dbReference type="HAMAP" id="MF_00219">
    <property type="entry name" value="PyrC_classII"/>
    <property type="match status" value="1"/>
</dbReference>
<dbReference type="InterPro" id="IPR006680">
    <property type="entry name" value="Amidohydro-rel"/>
</dbReference>
<dbReference type="InterPro" id="IPR004721">
    <property type="entry name" value="DHOdimr"/>
</dbReference>
<dbReference type="InterPro" id="IPR002195">
    <property type="entry name" value="Dihydroorotase_CS"/>
</dbReference>
<dbReference type="InterPro" id="IPR032466">
    <property type="entry name" value="Metal_Hydrolase"/>
</dbReference>
<dbReference type="NCBIfam" id="TIGR00856">
    <property type="entry name" value="pyrC_dimer"/>
    <property type="match status" value="1"/>
</dbReference>
<dbReference type="PANTHER" id="PTHR43137">
    <property type="entry name" value="DIHYDROOROTASE"/>
    <property type="match status" value="1"/>
</dbReference>
<dbReference type="PANTHER" id="PTHR43137:SF1">
    <property type="entry name" value="DIHYDROOROTASE"/>
    <property type="match status" value="1"/>
</dbReference>
<dbReference type="Pfam" id="PF01979">
    <property type="entry name" value="Amidohydro_1"/>
    <property type="match status" value="1"/>
</dbReference>
<dbReference type="PIRSF" id="PIRSF001237">
    <property type="entry name" value="DHOdimr"/>
    <property type="match status" value="1"/>
</dbReference>
<dbReference type="SUPFAM" id="SSF51556">
    <property type="entry name" value="Metallo-dependent hydrolases"/>
    <property type="match status" value="1"/>
</dbReference>
<dbReference type="PROSITE" id="PS00482">
    <property type="entry name" value="DIHYDROOROTASE_1"/>
    <property type="match status" value="1"/>
</dbReference>
<dbReference type="PROSITE" id="PS00483">
    <property type="entry name" value="DIHYDROOROTASE_2"/>
    <property type="match status" value="1"/>
</dbReference>
<protein>
    <recommendedName>
        <fullName evidence="1">Dihydroorotase</fullName>
        <shortName evidence="1">DHOase</shortName>
        <ecNumber evidence="1">3.5.2.3</ecNumber>
    </recommendedName>
</protein>
<organism>
    <name type="scientific">Ectopseudomonas mendocina (strain ymp)</name>
    <name type="common">Pseudomonas mendocina</name>
    <dbReference type="NCBI Taxonomy" id="399739"/>
    <lineage>
        <taxon>Bacteria</taxon>
        <taxon>Pseudomonadati</taxon>
        <taxon>Pseudomonadota</taxon>
        <taxon>Gammaproteobacteria</taxon>
        <taxon>Pseudomonadales</taxon>
        <taxon>Pseudomonadaceae</taxon>
        <taxon>Ectopseudomonas</taxon>
    </lineage>
</organism>
<proteinExistence type="inferred from homology"/>